<organism>
    <name type="scientific">Oryza sativa subsp. indica</name>
    <name type="common">Rice</name>
    <dbReference type="NCBI Taxonomy" id="39946"/>
    <lineage>
        <taxon>Eukaryota</taxon>
        <taxon>Viridiplantae</taxon>
        <taxon>Streptophyta</taxon>
        <taxon>Embryophyta</taxon>
        <taxon>Tracheophyta</taxon>
        <taxon>Spermatophyta</taxon>
        <taxon>Magnoliopsida</taxon>
        <taxon>Liliopsida</taxon>
        <taxon>Poales</taxon>
        <taxon>Poaceae</taxon>
        <taxon>BOP clade</taxon>
        <taxon>Oryzoideae</taxon>
        <taxon>Oryzeae</taxon>
        <taxon>Oryzinae</taxon>
        <taxon>Oryza</taxon>
        <taxon>Oryza sativa</taxon>
    </lineage>
</organism>
<proteinExistence type="evidence at protein level"/>
<accession>A2X674</accession>
<accession>A5JPU4</accession>
<accession>B8ADZ9</accession>
<accession>Q9XH34</accession>
<gene>
    <name type="primary">HOX7</name>
    <name type="ORF">OsI_07709</name>
</gene>
<sequence>MELELSLGDSPAPVKATIAPTPVLIPTCMGDEEDLELVLGVRATRRDEQDDQTTCTQSSEEAMEGEEDETRPHGEAPVESLSFPLFVSSAETGSANSEMCTRGFDVNTRPADGGAEAGRPSSPSSMQEASTRQQVADQEAADDEDNGGGGARKKLRLSKEQSSFLEDSFKEHSTLTPKQKSDLANRLNLRPRQVEVWFQNRRARTKLKQTEVDCEHLKRCCERLTRENRRLQREVAELRGALRTTTSSYPPLYGLHHLPAAAGTVFRVCPSCEHSKVVAAAASESFSPRVFAGGGAPAAITAAAAVPSPGAGSPPSSSAALFGARRPHFGPFAAAVIPPVLRRQPSATS</sequence>
<protein>
    <recommendedName>
        <fullName>Homeobox-leucine zipper protein HOX7</fullName>
    </recommendedName>
    <alternativeName>
        <fullName>HD-ZIP protein HOX7</fullName>
    </alternativeName>
    <alternativeName>
        <fullName>Homeodomain transcription factor HOX7</fullName>
    </alternativeName>
    <alternativeName>
        <fullName>OsHox7</fullName>
    </alternativeName>
</protein>
<keyword id="KW-0238">DNA-binding</keyword>
<keyword id="KW-0371">Homeobox</keyword>
<keyword id="KW-0539">Nucleus</keyword>
<keyword id="KW-1185">Reference proteome</keyword>
<keyword id="KW-0804">Transcription</keyword>
<keyword id="KW-0805">Transcription regulation</keyword>
<evidence type="ECO:0000255" key="1">
    <source>
        <dbReference type="PROSITE-ProRule" id="PRU00108"/>
    </source>
</evidence>
<evidence type="ECO:0000256" key="2">
    <source>
        <dbReference type="SAM" id="MobiDB-lite"/>
    </source>
</evidence>
<evidence type="ECO:0000269" key="3">
    <source>
    </source>
</evidence>
<evidence type="ECO:0000269" key="4">
    <source>
    </source>
</evidence>
<evidence type="ECO:0000305" key="5"/>
<comment type="function">
    <text evidence="3">Probable transcription factor that binds to the DNA sequence 5'-CAAT[GC]ATTG-3'.</text>
</comment>
<comment type="subunit">
    <text evidence="3 5">Homodimer (Probable). May form a heterodimer with HOX1, HOX2 or HOX3.</text>
</comment>
<comment type="subcellular location">
    <subcellularLocation>
        <location evidence="5">Nucleus</location>
    </subcellularLocation>
</comment>
<comment type="tissue specificity">
    <text evidence="3 4">Expressed in seedlings, roots, leaves, nodes, internodes, flowers and embryo.</text>
</comment>
<comment type="similarity">
    <text evidence="5">Belongs to the HD-ZIP homeobox family. Class II subfamily.</text>
</comment>
<dbReference type="EMBL" id="CM000127">
    <property type="protein sequence ID" value="EEC73430.1"/>
    <property type="molecule type" value="Genomic_DNA"/>
</dbReference>
<dbReference type="EMBL" id="AF145731">
    <property type="protein sequence ID" value="AAD37700.1"/>
    <property type="molecule type" value="mRNA"/>
</dbReference>
<dbReference type="EMBL" id="EF555527">
    <property type="protein sequence ID" value="ABQ57270.1"/>
    <property type="molecule type" value="mRNA"/>
</dbReference>
<dbReference type="SMR" id="A2X674"/>
<dbReference type="EnsemblPlants" id="BGIOSGA006230-TA">
    <property type="protein sequence ID" value="BGIOSGA006230-PA"/>
    <property type="gene ID" value="BGIOSGA006230"/>
</dbReference>
<dbReference type="EnsemblPlants" id="OsGoSa_02g0021780.02">
    <property type="protein sequence ID" value="OsGoSa_02g0021780.02"/>
    <property type="gene ID" value="OsGoSa_02g0021780"/>
</dbReference>
<dbReference type="EnsemblPlants" id="OsIR64_02g0021130.02">
    <property type="protein sequence ID" value="OsIR64_02g0021130.02"/>
    <property type="gene ID" value="OsIR64_02g0021130"/>
</dbReference>
<dbReference type="EnsemblPlants" id="OsKYG_02g0021320.01">
    <property type="protein sequence ID" value="OsKYG_02g0021320.01"/>
    <property type="gene ID" value="OsKYG_02g0021320"/>
</dbReference>
<dbReference type="EnsemblPlants" id="OsLima_02g0021580.02">
    <property type="protein sequence ID" value="OsLima_02g0021580.02"/>
    <property type="gene ID" value="OsLima_02g0021580"/>
</dbReference>
<dbReference type="EnsemblPlants" id="OsLiXu_02g0021480.01">
    <property type="protein sequence ID" value="OsLiXu_02g0021480.01"/>
    <property type="gene ID" value="OsLiXu_02g0021480"/>
</dbReference>
<dbReference type="EnsemblPlants" id="OsMH63_02G021900_04">
    <property type="protein sequence ID" value="OsMH63_02G021900_04"/>
    <property type="gene ID" value="OsMH63_02G021900"/>
</dbReference>
<dbReference type="EnsemblPlants" id="OsPr106_02g0021410.01">
    <property type="protein sequence ID" value="OsPr106_02g0021410.01"/>
    <property type="gene ID" value="OsPr106_02g0021410"/>
</dbReference>
<dbReference type="EnsemblPlants" id="OsZS97_02G021200_02">
    <property type="protein sequence ID" value="OsZS97_02G021200_02"/>
    <property type="gene ID" value="OsZS97_02G021200"/>
</dbReference>
<dbReference type="Gramene" id="BGIOSGA006230-TA">
    <property type="protein sequence ID" value="BGIOSGA006230-PA"/>
    <property type="gene ID" value="BGIOSGA006230"/>
</dbReference>
<dbReference type="Gramene" id="OsGoSa_02g0021780.02">
    <property type="protein sequence ID" value="OsGoSa_02g0021780.02"/>
    <property type="gene ID" value="OsGoSa_02g0021780"/>
</dbReference>
<dbReference type="Gramene" id="OsIR64_02g0021130.02">
    <property type="protein sequence ID" value="OsIR64_02g0021130.02"/>
    <property type="gene ID" value="OsIR64_02g0021130"/>
</dbReference>
<dbReference type="Gramene" id="OsKYG_02g0021320.01">
    <property type="protein sequence ID" value="OsKYG_02g0021320.01"/>
    <property type="gene ID" value="OsKYG_02g0021320"/>
</dbReference>
<dbReference type="Gramene" id="OsLima_02g0021580.02">
    <property type="protein sequence ID" value="OsLima_02g0021580.02"/>
    <property type="gene ID" value="OsLima_02g0021580"/>
</dbReference>
<dbReference type="Gramene" id="OsLiXu_02g0021480.01">
    <property type="protein sequence ID" value="OsLiXu_02g0021480.01"/>
    <property type="gene ID" value="OsLiXu_02g0021480"/>
</dbReference>
<dbReference type="Gramene" id="OsMH63_02G021900_04">
    <property type="protein sequence ID" value="OsMH63_02G021900_04"/>
    <property type="gene ID" value="OsMH63_02G021900"/>
</dbReference>
<dbReference type="Gramene" id="OsPr106_02g0021410.01">
    <property type="protein sequence ID" value="OsPr106_02g0021410.01"/>
    <property type="gene ID" value="OsPr106_02g0021410"/>
</dbReference>
<dbReference type="Gramene" id="OsZS97_02G021200_02">
    <property type="protein sequence ID" value="OsZS97_02G021200_02"/>
    <property type="gene ID" value="OsZS97_02G021200"/>
</dbReference>
<dbReference type="HOGENOM" id="CLU_049516_2_1_1"/>
<dbReference type="OMA" id="QPEEDAH"/>
<dbReference type="OrthoDB" id="6159439at2759"/>
<dbReference type="Proteomes" id="UP000007015">
    <property type="component" value="Chromosome 2"/>
</dbReference>
<dbReference type="GO" id="GO:0005634">
    <property type="term" value="C:nucleus"/>
    <property type="evidence" value="ECO:0007669"/>
    <property type="project" value="UniProtKB-SubCell"/>
</dbReference>
<dbReference type="GO" id="GO:0000981">
    <property type="term" value="F:DNA-binding transcription factor activity, RNA polymerase II-specific"/>
    <property type="evidence" value="ECO:0007669"/>
    <property type="project" value="InterPro"/>
</dbReference>
<dbReference type="GO" id="GO:0043565">
    <property type="term" value="F:sequence-specific DNA binding"/>
    <property type="evidence" value="ECO:0007669"/>
    <property type="project" value="InterPro"/>
</dbReference>
<dbReference type="CDD" id="cd00086">
    <property type="entry name" value="homeodomain"/>
    <property type="match status" value="1"/>
</dbReference>
<dbReference type="FunFam" id="1.10.10.60:FF:000577">
    <property type="entry name" value="Homeobox-leucine zipper protein 18"/>
    <property type="match status" value="1"/>
</dbReference>
<dbReference type="Gene3D" id="1.10.10.60">
    <property type="entry name" value="Homeodomain-like"/>
    <property type="match status" value="1"/>
</dbReference>
<dbReference type="InterPro" id="IPR001356">
    <property type="entry name" value="HD"/>
</dbReference>
<dbReference type="InterPro" id="IPR050762">
    <property type="entry name" value="HD-ZIP_Homeobox_LZ_Class_II"/>
</dbReference>
<dbReference type="InterPro" id="IPR017970">
    <property type="entry name" value="Homeobox_CS"/>
</dbReference>
<dbReference type="InterPro" id="IPR009057">
    <property type="entry name" value="Homeodomain-like_sf"/>
</dbReference>
<dbReference type="InterPro" id="IPR003106">
    <property type="entry name" value="Leu_zip_homeo"/>
</dbReference>
<dbReference type="PANTHER" id="PTHR45714">
    <property type="entry name" value="HOMEOBOX-LEUCINE ZIPPER PROTEIN HAT14"/>
    <property type="match status" value="1"/>
</dbReference>
<dbReference type="PANTHER" id="PTHR45714:SF21">
    <property type="entry name" value="HOMEOBOX-LEUCINE ZIPPER PROTEIN HOX7"/>
    <property type="match status" value="1"/>
</dbReference>
<dbReference type="Pfam" id="PF02183">
    <property type="entry name" value="HALZ"/>
    <property type="match status" value="1"/>
</dbReference>
<dbReference type="Pfam" id="PF00046">
    <property type="entry name" value="Homeodomain"/>
    <property type="match status" value="1"/>
</dbReference>
<dbReference type="SMART" id="SM00340">
    <property type="entry name" value="HALZ"/>
    <property type="match status" value="1"/>
</dbReference>
<dbReference type="SMART" id="SM00389">
    <property type="entry name" value="HOX"/>
    <property type="match status" value="1"/>
</dbReference>
<dbReference type="SUPFAM" id="SSF46689">
    <property type="entry name" value="Homeodomain-like"/>
    <property type="match status" value="1"/>
</dbReference>
<dbReference type="PROSITE" id="PS00027">
    <property type="entry name" value="HOMEOBOX_1"/>
    <property type="match status" value="1"/>
</dbReference>
<dbReference type="PROSITE" id="PS50071">
    <property type="entry name" value="HOMEOBOX_2"/>
    <property type="match status" value="1"/>
</dbReference>
<name>HOX7_ORYSI</name>
<reference key="1">
    <citation type="journal article" date="2005" name="PLoS Biol.">
        <title>The genomes of Oryza sativa: a history of duplications.</title>
        <authorList>
            <person name="Yu J."/>
            <person name="Wang J."/>
            <person name="Lin W."/>
            <person name="Li S."/>
            <person name="Li H."/>
            <person name="Zhou J."/>
            <person name="Ni P."/>
            <person name="Dong W."/>
            <person name="Hu S."/>
            <person name="Zeng C."/>
            <person name="Zhang J."/>
            <person name="Zhang Y."/>
            <person name="Li R."/>
            <person name="Xu Z."/>
            <person name="Li S."/>
            <person name="Li X."/>
            <person name="Zheng H."/>
            <person name="Cong L."/>
            <person name="Lin L."/>
            <person name="Yin J."/>
            <person name="Geng J."/>
            <person name="Li G."/>
            <person name="Shi J."/>
            <person name="Liu J."/>
            <person name="Lv H."/>
            <person name="Li J."/>
            <person name="Wang J."/>
            <person name="Deng Y."/>
            <person name="Ran L."/>
            <person name="Shi X."/>
            <person name="Wang X."/>
            <person name="Wu Q."/>
            <person name="Li C."/>
            <person name="Ren X."/>
            <person name="Wang J."/>
            <person name="Wang X."/>
            <person name="Li D."/>
            <person name="Liu D."/>
            <person name="Zhang X."/>
            <person name="Ji Z."/>
            <person name="Zhao W."/>
            <person name="Sun Y."/>
            <person name="Zhang Z."/>
            <person name="Bao J."/>
            <person name="Han Y."/>
            <person name="Dong L."/>
            <person name="Ji J."/>
            <person name="Chen P."/>
            <person name="Wu S."/>
            <person name="Liu J."/>
            <person name="Xiao Y."/>
            <person name="Bu D."/>
            <person name="Tan J."/>
            <person name="Yang L."/>
            <person name="Ye C."/>
            <person name="Zhang J."/>
            <person name="Xu J."/>
            <person name="Zhou Y."/>
            <person name="Yu Y."/>
            <person name="Zhang B."/>
            <person name="Zhuang S."/>
            <person name="Wei H."/>
            <person name="Liu B."/>
            <person name="Lei M."/>
            <person name="Yu H."/>
            <person name="Li Y."/>
            <person name="Xu H."/>
            <person name="Wei S."/>
            <person name="He X."/>
            <person name="Fang L."/>
            <person name="Zhang Z."/>
            <person name="Zhang Y."/>
            <person name="Huang X."/>
            <person name="Su Z."/>
            <person name="Tong W."/>
            <person name="Li J."/>
            <person name="Tong Z."/>
            <person name="Li S."/>
            <person name="Ye J."/>
            <person name="Wang L."/>
            <person name="Fang L."/>
            <person name="Lei T."/>
            <person name="Chen C.-S."/>
            <person name="Chen H.-C."/>
            <person name="Xu Z."/>
            <person name="Li H."/>
            <person name="Huang H."/>
            <person name="Zhang F."/>
            <person name="Xu H."/>
            <person name="Li N."/>
            <person name="Zhao C."/>
            <person name="Li S."/>
            <person name="Dong L."/>
            <person name="Huang Y."/>
            <person name="Li L."/>
            <person name="Xi Y."/>
            <person name="Qi Q."/>
            <person name="Li W."/>
            <person name="Zhang B."/>
            <person name="Hu W."/>
            <person name="Zhang Y."/>
            <person name="Tian X."/>
            <person name="Jiao Y."/>
            <person name="Liang X."/>
            <person name="Jin J."/>
            <person name="Gao L."/>
            <person name="Zheng W."/>
            <person name="Hao B."/>
            <person name="Liu S.-M."/>
            <person name="Wang W."/>
            <person name="Yuan L."/>
            <person name="Cao M."/>
            <person name="McDermott J."/>
            <person name="Samudrala R."/>
            <person name="Wang J."/>
            <person name="Wong G.K.-S."/>
            <person name="Yang H."/>
        </authorList>
    </citation>
    <scope>NUCLEOTIDE SEQUENCE [LARGE SCALE GENOMIC DNA]</scope>
    <source>
        <strain>cv. 93-11</strain>
    </source>
</reference>
<reference key="2">
    <citation type="journal article" date="2000" name="Mol. Gen. Genet.">
        <title>HD-Zip proteins of families I and II from rice: interactions and functional properties.</title>
        <authorList>
            <person name="Meijer A.H."/>
            <person name="de Kam R.J."/>
            <person name="d'Erfurth I."/>
            <person name="Shen W.-B."/>
            <person name="Hoge J.H.C."/>
        </authorList>
    </citation>
    <scope>NUCLEOTIDE SEQUENCE [MRNA] OF 84-349</scope>
    <scope>FUNCTION</scope>
    <scope>SUBUNIT</scope>
    <scope>TISSUE SPECIFICITY</scope>
    <source>
        <strain>cv. IR58</strain>
        <tissue>Seed embryo</tissue>
    </source>
</reference>
<reference key="3">
    <citation type="journal article" date="2008" name="Plant Mol. Biol.">
        <title>A genome-wide survey of HD-Zip genes in rice and analysis of drought-responsive family members.</title>
        <authorList>
            <person name="Agalou A."/>
            <person name="Purwantomo S."/>
            <person name="Oevernaes E."/>
            <person name="Johannesson H."/>
            <person name="Zhu X."/>
            <person name="Estiati A."/>
            <person name="de Kam R.J."/>
            <person name="Engstroem P."/>
            <person name="Slamet-Loedin I.H."/>
            <person name="Zhu Z."/>
            <person name="Wang M."/>
            <person name="Xiong L."/>
            <person name="Meijer A.H."/>
            <person name="Ouwerkerk P.B.F."/>
        </authorList>
    </citation>
    <scope>NUCLEOTIDE SEQUENCE [MRNA] OF 191-349</scope>
    <scope>TISSUE SPECIFICITY</scope>
    <scope>GENE FAMILY</scope>
    <scope>NOMENCLATURE</scope>
    <source>
        <strain>cv. Minghui 86</strain>
    </source>
</reference>
<feature type="chain" id="PRO_0000331686" description="Homeobox-leucine zipper protein HOX7">
    <location>
        <begin position="1"/>
        <end position="349"/>
    </location>
</feature>
<feature type="DNA-binding region" description="Homeobox" evidence="1">
    <location>
        <begin position="150"/>
        <end position="209"/>
    </location>
</feature>
<feature type="region of interest" description="Disordered" evidence="2">
    <location>
        <begin position="42"/>
        <end position="186"/>
    </location>
</feature>
<feature type="region of interest" description="Leucine-zipper">
    <location>
        <begin position="208"/>
        <end position="252"/>
    </location>
</feature>
<feature type="compositionally biased region" description="Polar residues" evidence="2">
    <location>
        <begin position="89"/>
        <end position="99"/>
    </location>
</feature>
<feature type="compositionally biased region" description="Polar residues" evidence="2">
    <location>
        <begin position="121"/>
        <end position="135"/>
    </location>
</feature>
<feature type="compositionally biased region" description="Basic and acidic residues" evidence="2">
    <location>
        <begin position="167"/>
        <end position="183"/>
    </location>
</feature>